<evidence type="ECO:0000255" key="1"/>
<evidence type="ECO:0000255" key="2">
    <source>
        <dbReference type="PROSITE-ProRule" id="PRU00039"/>
    </source>
</evidence>
<evidence type="ECO:0000269" key="3">
    <source>
    </source>
</evidence>
<evidence type="ECO:0000269" key="4">
    <source>
    </source>
</evidence>
<evidence type="ECO:0000269" key="5">
    <source>
    </source>
</evidence>
<evidence type="ECO:0000269" key="6">
    <source>
    </source>
</evidence>
<evidence type="ECO:0000269" key="7">
    <source>
    </source>
</evidence>
<evidence type="ECO:0000305" key="8"/>
<evidence type="ECO:0007829" key="9">
    <source>
        <dbReference type="PDB" id="4JPH"/>
    </source>
</evidence>
<name>GREM2_MOUSE</name>
<accession>O88273</accession>
<proteinExistence type="evidence at protein level"/>
<comment type="function">
    <text evidence="3 4 5">Cytokine that inhibits the activity of BMP2 and BMP4 in a dose-dependent manner, and thereby modulates signaling by BMP family members. Contributes to the regulation of embryonic morphogenesis via BMP family members. Antagonizes BMP4-induced suppression of progesterone production in granulosa cells.</text>
</comment>
<comment type="subunit">
    <text evidence="3 4 5">Homodimer. Interacts with BMP2, BMP4 and BMP7, but has lower affinity for BMP7 than for BMP2 and BMP4. Binds heparin; this impairs the interaction with BMP2.</text>
</comment>
<comment type="interaction">
    <interactant intactId="EBI-16064759">
        <id>O88273</id>
    </interactant>
    <interactant intactId="EBI-16064759">
        <id>O88273</id>
        <label>Grem2</label>
    </interactant>
    <organismsDiffer>false</organismsDiffer>
    <experiments>3</experiments>
</comment>
<comment type="subcellular location">
    <subcellularLocation>
        <location evidence="8">Secreted</location>
    </subcellularLocation>
</comment>
<comment type="tissue specificity">
    <text evidence="3">Highly expressed in the ovary, followed by brain, spleen, colon, kidney and uterus. In ovary expressed in granulosa cells of selective early antral follicles.</text>
</comment>
<comment type="developmental stage">
    <text evidence="6 7">Expressed in commissural neurons in the developing spinal cord (PubMed:9639362). Expressed during the development of teeth and hair follicles (PubMed:26416033).</text>
</comment>
<comment type="induction">
    <text evidence="3">Up-regulated by gonadotropin treatment.</text>
</comment>
<comment type="PTM">
    <text evidence="4">N-glycosylated.</text>
</comment>
<comment type="similarity">
    <text evidence="8">Belongs to the DAN family.</text>
</comment>
<feature type="signal peptide" evidence="1">
    <location>
        <begin position="1"/>
        <end position="21"/>
    </location>
</feature>
<feature type="chain" id="PRO_0000006721" description="Gremlin-2">
    <location>
        <begin position="22"/>
        <end position="168"/>
    </location>
</feature>
<feature type="domain" description="CTCK" evidence="2">
    <location>
        <begin position="73"/>
        <end position="163"/>
    </location>
</feature>
<feature type="glycosylation site" description="N-linked (GlcNAc...) asparagine" evidence="1">
    <location>
        <position position="40"/>
    </location>
</feature>
<feature type="glycosylation site" description="N-linked (GlcNAc...) asparagine" evidence="1">
    <location>
        <position position="161"/>
    </location>
</feature>
<feature type="disulfide bond" evidence="2 5">
    <location>
        <begin position="73"/>
        <end position="123"/>
    </location>
</feature>
<feature type="disulfide bond" evidence="2 5">
    <location>
        <begin position="87"/>
        <end position="137"/>
    </location>
</feature>
<feature type="disulfide bond" evidence="2 5">
    <location>
        <begin position="97"/>
        <end position="155"/>
    </location>
</feature>
<feature type="disulfide bond" evidence="2 5">
    <location>
        <begin position="101"/>
        <end position="157"/>
    </location>
</feature>
<feature type="mutagenesis site" description="Slightly reduces affinity for BMP2 and BMP4. No effect on inhibition of BMP2 signaling." evidence="5">
    <original>L</original>
    <variation>A</variation>
    <location>
        <position position="68"/>
    </location>
</feature>
<feature type="mutagenesis site" description="Strongly reduces affinity for BMP2 and BMP4. Reduces inhibition of BMP2 signaling." evidence="5">
    <original>W</original>
    <variation>A</variation>
    <location>
        <position position="72"/>
    </location>
</feature>
<feature type="mutagenesis site" description="Reduces affinity for BMP2 and BMP4. Reduces inhibition of BMP2 signaling." evidence="5">
    <original>F</original>
    <variation>A</variation>
    <location>
        <position position="96"/>
    </location>
</feature>
<feature type="mutagenesis site" description="Strongly reduces affinity for BMP2 and BMP4. Strongly reduces inhibition of BMP2 signaling." evidence="5">
    <original>Y</original>
    <variation>A</variation>
    <location>
        <position position="98"/>
    </location>
</feature>
<feature type="mutagenesis site" description="Reduces affinity for BMP2 and BMP4. Strongly reduces inhibition of BMP2 signaling." evidence="5">
    <original>F</original>
    <variation>A</variation>
    <location>
        <position position="104"/>
    </location>
</feature>
<feature type="mutagenesis site" description="Strongly reduces affinity for BMP2 and BMP4. Strongly reduces inhibition of BMP2 signaling." evidence="5">
    <original>Y</original>
    <variation>A</variation>
    <location>
        <position position="105"/>
    </location>
</feature>
<feature type="mutagenesis site" description="Strongly reduces affinity for BMP2 and BMP4. Strongly reduces inhibition of BMP2 signaling." evidence="5">
    <original>F</original>
    <variation>A</variation>
    <location>
        <position position="117"/>
    </location>
</feature>
<feature type="mutagenesis site" description="No effect on dimerization. No effect on inhibition of BMP signaling." evidence="4">
    <original>C</original>
    <variation>S</variation>
    <location>
        <position position="120"/>
    </location>
</feature>
<feature type="helix" evidence="9">
    <location>
        <begin position="49"/>
        <end position="53"/>
    </location>
</feature>
<feature type="helix" evidence="9">
    <location>
        <begin position="57"/>
        <end position="62"/>
    </location>
</feature>
<feature type="helix" evidence="9">
    <location>
        <begin position="65"/>
        <end position="68"/>
    </location>
</feature>
<feature type="strand" evidence="9">
    <location>
        <begin position="72"/>
        <end position="82"/>
    </location>
</feature>
<feature type="strand" evidence="9">
    <location>
        <begin position="90"/>
        <end position="107"/>
    </location>
</feature>
<feature type="strand" evidence="9">
    <location>
        <begin position="110"/>
        <end position="113"/>
    </location>
</feature>
<feature type="strand" evidence="9">
    <location>
        <begin position="116"/>
        <end position="120"/>
    </location>
</feature>
<feature type="strand" evidence="9">
    <location>
        <begin position="122"/>
        <end position="136"/>
    </location>
</feature>
<feature type="strand" evidence="9">
    <location>
        <begin position="140"/>
        <end position="158"/>
    </location>
</feature>
<dbReference type="EMBL" id="AB011030">
    <property type="protein sequence ID" value="BAA29038.1"/>
    <property type="molecule type" value="mRNA"/>
</dbReference>
<dbReference type="EMBL" id="BC079905">
    <property type="protein sequence ID" value="AAH79905.1"/>
    <property type="molecule type" value="mRNA"/>
</dbReference>
<dbReference type="CCDS" id="CCDS15545.1"/>
<dbReference type="RefSeq" id="NP_001408412.1">
    <property type="nucleotide sequence ID" value="NM_001421483.1"/>
</dbReference>
<dbReference type="RefSeq" id="NP_001408413.1">
    <property type="nucleotide sequence ID" value="NM_001421484.1"/>
</dbReference>
<dbReference type="RefSeq" id="NP_001408414.1">
    <property type="nucleotide sequence ID" value="NM_001421485.1"/>
</dbReference>
<dbReference type="RefSeq" id="NP_001408415.1">
    <property type="nucleotide sequence ID" value="NM_001421486.1"/>
</dbReference>
<dbReference type="RefSeq" id="NP_035955.1">
    <property type="nucleotide sequence ID" value="NM_011825.2"/>
</dbReference>
<dbReference type="RefSeq" id="XP_006496889.1">
    <property type="nucleotide sequence ID" value="XM_006496826.3"/>
</dbReference>
<dbReference type="RefSeq" id="XP_017175937.1">
    <property type="nucleotide sequence ID" value="XM_017320448.1"/>
</dbReference>
<dbReference type="PDB" id="4JPH">
    <property type="method" value="X-ray"/>
    <property type="resolution" value="2.25 A"/>
    <property type="chains" value="A/B/C/D=22-168"/>
</dbReference>
<dbReference type="PDB" id="5HK5">
    <property type="method" value="X-ray"/>
    <property type="resolution" value="2.90 A"/>
    <property type="chains" value="E/F/G/H=22-168"/>
</dbReference>
<dbReference type="PDBsum" id="4JPH"/>
<dbReference type="PDBsum" id="5HK5"/>
<dbReference type="SMR" id="O88273"/>
<dbReference type="DIP" id="DIP-60475N"/>
<dbReference type="FunCoup" id="O88273">
    <property type="interactions" value="475"/>
</dbReference>
<dbReference type="IntAct" id="O88273">
    <property type="interactions" value="2"/>
</dbReference>
<dbReference type="STRING" id="10090.ENSMUSP00000049640"/>
<dbReference type="GlyCosmos" id="O88273">
    <property type="glycosylation" value="2 sites, No reported glycans"/>
</dbReference>
<dbReference type="GlyGen" id="O88273">
    <property type="glycosylation" value="2 sites, 1 N-linked glycan (1 site)"/>
</dbReference>
<dbReference type="iPTMnet" id="O88273"/>
<dbReference type="PhosphoSitePlus" id="O88273"/>
<dbReference type="jPOST" id="O88273"/>
<dbReference type="PaxDb" id="10090-ENSMUSP00000049640"/>
<dbReference type="PeptideAtlas" id="O88273"/>
<dbReference type="ProteomicsDB" id="271296"/>
<dbReference type="Pumba" id="O88273"/>
<dbReference type="Antibodypedia" id="4089">
    <property type="antibodies" value="160 antibodies from 29 providers"/>
</dbReference>
<dbReference type="Ensembl" id="ENSMUST00000055294.4">
    <property type="protein sequence ID" value="ENSMUSP00000049640.4"/>
    <property type="gene ID" value="ENSMUSG00000050069.4"/>
</dbReference>
<dbReference type="GeneID" id="23893"/>
<dbReference type="KEGG" id="mmu:23893"/>
<dbReference type="UCSC" id="uc007dtf.1">
    <property type="organism name" value="mouse"/>
</dbReference>
<dbReference type="AGR" id="MGI:1344367"/>
<dbReference type="CTD" id="64388"/>
<dbReference type="MGI" id="MGI:1344367">
    <property type="gene designation" value="Grem2"/>
</dbReference>
<dbReference type="VEuPathDB" id="HostDB:ENSMUSG00000050069"/>
<dbReference type="eggNOG" id="ENOG502QZFW">
    <property type="taxonomic scope" value="Eukaryota"/>
</dbReference>
<dbReference type="GeneTree" id="ENSGT00940000154209"/>
<dbReference type="HOGENOM" id="CLU_101024_2_0_1"/>
<dbReference type="InParanoid" id="O88273"/>
<dbReference type="OMA" id="YIPRHIK"/>
<dbReference type="OrthoDB" id="10061784at2759"/>
<dbReference type="PhylomeDB" id="O88273"/>
<dbReference type="TreeFam" id="TF106445"/>
<dbReference type="Reactome" id="R-MMU-201451">
    <property type="pathway name" value="Signaling by BMP"/>
</dbReference>
<dbReference type="BioGRID-ORCS" id="23893">
    <property type="hits" value="3 hits in 76 CRISPR screens"/>
</dbReference>
<dbReference type="ChiTaRS" id="Grem2">
    <property type="organism name" value="mouse"/>
</dbReference>
<dbReference type="EvolutionaryTrace" id="O88273"/>
<dbReference type="PRO" id="PR:O88273"/>
<dbReference type="Proteomes" id="UP000000589">
    <property type="component" value="Chromosome 1"/>
</dbReference>
<dbReference type="RNAct" id="O88273">
    <property type="molecule type" value="protein"/>
</dbReference>
<dbReference type="Bgee" id="ENSMUSG00000050069">
    <property type="expression patterns" value="Expressed in paneth cell and 170 other cell types or tissues"/>
</dbReference>
<dbReference type="ExpressionAtlas" id="O88273">
    <property type="expression patterns" value="baseline and differential"/>
</dbReference>
<dbReference type="GO" id="GO:0005615">
    <property type="term" value="C:extracellular space"/>
    <property type="evidence" value="ECO:0000315"/>
    <property type="project" value="UniProtKB"/>
</dbReference>
<dbReference type="GO" id="GO:0036122">
    <property type="term" value="F:BMP binding"/>
    <property type="evidence" value="ECO:0000315"/>
    <property type="project" value="UniProtKB"/>
</dbReference>
<dbReference type="GO" id="GO:0005125">
    <property type="term" value="F:cytokine activity"/>
    <property type="evidence" value="ECO:0007669"/>
    <property type="project" value="UniProtKB-KW"/>
</dbReference>
<dbReference type="GO" id="GO:0008201">
    <property type="term" value="F:heparin binding"/>
    <property type="evidence" value="ECO:0000314"/>
    <property type="project" value="UniProtKB"/>
</dbReference>
<dbReference type="GO" id="GO:0042802">
    <property type="term" value="F:identical protein binding"/>
    <property type="evidence" value="ECO:0000315"/>
    <property type="project" value="UniProtKB"/>
</dbReference>
<dbReference type="GO" id="GO:0019221">
    <property type="term" value="P:cytokine-mediated signaling pathway"/>
    <property type="evidence" value="ECO:0000315"/>
    <property type="project" value="UniProtKB"/>
</dbReference>
<dbReference type="GO" id="GO:0048263">
    <property type="term" value="P:determination of dorsal identity"/>
    <property type="evidence" value="ECO:0000315"/>
    <property type="project" value="UniProtKB"/>
</dbReference>
<dbReference type="GO" id="GO:0010172">
    <property type="term" value="P:embryonic body morphogenesis"/>
    <property type="evidence" value="ECO:0000315"/>
    <property type="project" value="UniProtKB"/>
</dbReference>
<dbReference type="GO" id="GO:0030514">
    <property type="term" value="P:negative regulation of BMP signaling pathway"/>
    <property type="evidence" value="ECO:0000315"/>
    <property type="project" value="UniProtKB"/>
</dbReference>
<dbReference type="GO" id="GO:0060300">
    <property type="term" value="P:regulation of cytokine activity"/>
    <property type="evidence" value="ECO:0000315"/>
    <property type="project" value="UniProtKB"/>
</dbReference>
<dbReference type="GO" id="GO:0038098">
    <property type="term" value="P:sequestering of BMP from receptor via BMP binding"/>
    <property type="evidence" value="ECO:0000315"/>
    <property type="project" value="UniProtKB"/>
</dbReference>
<dbReference type="FunFam" id="2.10.90.10:FF:000013">
    <property type="entry name" value="Gremlin"/>
    <property type="match status" value="1"/>
</dbReference>
<dbReference type="Gene3D" id="2.10.90.10">
    <property type="entry name" value="Cystine-knot cytokines"/>
    <property type="match status" value="1"/>
</dbReference>
<dbReference type="InterPro" id="IPR006207">
    <property type="entry name" value="Cys_knot_C"/>
</dbReference>
<dbReference type="InterPro" id="IPR029034">
    <property type="entry name" value="Cystine-knot_cytokine"/>
</dbReference>
<dbReference type="InterPro" id="IPR004133">
    <property type="entry name" value="DAN"/>
</dbReference>
<dbReference type="InterPro" id="IPR017159">
    <property type="entry name" value="Gremlin-1/2"/>
</dbReference>
<dbReference type="PANTHER" id="PTHR15283">
    <property type="entry name" value="GREMLIN 1"/>
    <property type="match status" value="1"/>
</dbReference>
<dbReference type="PANTHER" id="PTHR15283:SF2">
    <property type="entry name" value="GREMLIN-2"/>
    <property type="match status" value="1"/>
</dbReference>
<dbReference type="Pfam" id="PF03045">
    <property type="entry name" value="DAN"/>
    <property type="match status" value="1"/>
</dbReference>
<dbReference type="PIRSF" id="PIRSF037254">
    <property type="entry name" value="Gremlin_precursor"/>
    <property type="match status" value="1"/>
</dbReference>
<dbReference type="SMART" id="SM00041">
    <property type="entry name" value="CT"/>
    <property type="match status" value="1"/>
</dbReference>
<dbReference type="PROSITE" id="PS01225">
    <property type="entry name" value="CTCK_2"/>
    <property type="match status" value="1"/>
</dbReference>
<reference key="1">
    <citation type="journal article" date="1998" name="Dev. Growth Differ.">
        <title>Sequence and expression of a novel mouse gene PRDC (protein related to DAN and cerberus) identified by a gene trap approach.</title>
        <authorList>
            <person name="Minabe-Saegusa C."/>
            <person name="Saegusa H."/>
            <person name="Tsukahara M."/>
            <person name="Noguchi S."/>
        </authorList>
    </citation>
    <scope>NUCLEOTIDE SEQUENCE [MRNA]</scope>
    <scope>DEVELOPMENTAL STAGE</scope>
    <source>
        <strain>C57BL/6J</strain>
        <tissue>CNS</tissue>
    </source>
</reference>
<reference key="2">
    <citation type="journal article" date="2004" name="Genome Res.">
        <title>The status, quality, and expansion of the NIH full-length cDNA project: the Mammalian Gene Collection (MGC).</title>
        <authorList>
            <consortium name="The MGC Project Team"/>
        </authorList>
    </citation>
    <scope>NUCLEOTIDE SEQUENCE [LARGE SCALE MRNA]</scope>
    <source>
        <strain>C57BL/6J</strain>
        <tissue>Head</tissue>
    </source>
</reference>
<reference key="3">
    <citation type="journal article" date="2004" name="J. Biol. Chem.">
        <title>Protein related to DAN and cerberus is a bone morphogenetic protein antagonist that participates in ovarian paracrine regulation.</title>
        <authorList>
            <person name="Sudo S."/>
            <person name="Avsian-Kretchmer O."/>
            <person name="Wang L.S."/>
            <person name="Hsueh A.J."/>
        </authorList>
    </citation>
    <scope>FUNCTION</scope>
    <scope>INTERACTION WITH BMP2 AND BMP4</scope>
    <scope>TISSUE SPECIFICITY</scope>
    <scope>INDUCTION</scope>
</reference>
<reference key="4">
    <citation type="journal article" date="2012" name="J. Mol. Biol.">
        <title>Members of the DAN family are BMP antagonists that form highly stable noncovalent dimers.</title>
        <authorList>
            <person name="Kattamuri C."/>
            <person name="Luedeke D.M."/>
            <person name="Nolan K."/>
            <person name="Rankin S.A."/>
            <person name="Greis K.D."/>
            <person name="Zorn A.M."/>
            <person name="Thompson T.B."/>
        </authorList>
    </citation>
    <scope>FUNCTION</scope>
    <scope>INTERACTION WITH BMP2; BMP4 AND BMP7</scope>
    <scope>MUTAGENESIS OF CYS-120</scope>
    <scope>SUBUNIT</scope>
    <scope>GLYCOSYLATION</scope>
    <scope>IDENTIFICATION BY MASS SPECTROMETRY</scope>
</reference>
<reference key="5">
    <citation type="journal article" date="2015" name="J. Dent. Res.">
        <title>GREMLIN 2 mutations and dental anomalies.</title>
        <authorList>
            <person name="Kantaputra P.N."/>
            <person name="Kaewgahya M."/>
            <person name="Hatsadaloi A."/>
            <person name="Vogel P."/>
            <person name="Kawasaki K."/>
            <person name="Ohazama A."/>
            <person name="Ketudat Cairns J.R."/>
        </authorList>
    </citation>
    <scope>DEVELOPMENTAL STAGE</scope>
</reference>
<reference key="6">
    <citation type="journal article" date="2013" name="Structure">
        <title>Structure of protein related to Dan and Cerberus: insights into the mechanism of bone morphogenetic protein antagonism.</title>
        <authorList>
            <person name="Nolan K."/>
            <person name="Kattamuri C."/>
            <person name="Luedeke D.M."/>
            <person name="Deng X."/>
            <person name="Jagpal A."/>
            <person name="Zhang F."/>
            <person name="Linhardt R.J."/>
            <person name="Kenny A.P."/>
            <person name="Zorn A.M."/>
            <person name="Thompson T.B."/>
        </authorList>
    </citation>
    <scope>X-RAY CRYSTALLOGRAPHY (2.25 ANGSTROMS) OF 22-168</scope>
    <scope>FUNCTION</scope>
    <scope>SUBUNIT</scope>
    <scope>INTERACTION WITH BMP2 AND BMP4</scope>
    <scope>HEPARIN-BINDING</scope>
    <scope>MUTAGENESIS OF LEU-68; TRP-72; PHE-96; TYR-98; PHE-104; TYR-105 AND PHE-117</scope>
    <scope>DISULFIDE BONDS</scope>
</reference>
<organism>
    <name type="scientific">Mus musculus</name>
    <name type="common">Mouse</name>
    <dbReference type="NCBI Taxonomy" id="10090"/>
    <lineage>
        <taxon>Eukaryota</taxon>
        <taxon>Metazoa</taxon>
        <taxon>Chordata</taxon>
        <taxon>Craniata</taxon>
        <taxon>Vertebrata</taxon>
        <taxon>Euteleostomi</taxon>
        <taxon>Mammalia</taxon>
        <taxon>Eutheria</taxon>
        <taxon>Euarchontoglires</taxon>
        <taxon>Glires</taxon>
        <taxon>Rodentia</taxon>
        <taxon>Myomorpha</taxon>
        <taxon>Muroidea</taxon>
        <taxon>Muridae</taxon>
        <taxon>Murinae</taxon>
        <taxon>Mus</taxon>
        <taxon>Mus</taxon>
    </lineage>
</organism>
<gene>
    <name type="primary">Grem2</name>
    <name type="synonym">Cktsf1b2</name>
    <name type="synonym">Prdc</name>
</gene>
<protein>
    <recommendedName>
        <fullName>Gremlin-2</fullName>
    </recommendedName>
    <alternativeName>
        <fullName>Cysteine knot superfamily 1, BMP antagonist 2</fullName>
    </alternativeName>
    <alternativeName>
        <fullName>Protein related to DAN and cerberus</fullName>
        <shortName>PRDC</shortName>
    </alternativeName>
</protein>
<sequence length="168" mass="19334">MFWKLSLTLLLVAVLVKVAETRKNRPAGAIPSPYKDGSSNNSERWHHQIKEVLASSQEALVVTERKYLKSDWCKTQPLRQTVSEEGCRSRTILNRFCYGQCNSFYIPRHVKKEEDSFQSCAFCKPQRVTSVIVELECPGLDPPFRIKKIQKVKHCRCMSVNLSDSDKQ</sequence>
<keyword id="KW-0002">3D-structure</keyword>
<keyword id="KW-0202">Cytokine</keyword>
<keyword id="KW-0217">Developmental protein</keyword>
<keyword id="KW-1015">Disulfide bond</keyword>
<keyword id="KW-0325">Glycoprotein</keyword>
<keyword id="KW-0358">Heparin-binding</keyword>
<keyword id="KW-1185">Reference proteome</keyword>
<keyword id="KW-0964">Secreted</keyword>
<keyword id="KW-0732">Signal</keyword>